<reference key="1">
    <citation type="journal article" date="2006" name="J. Bacteriol.">
        <title>Comparative genomic evidence for a close relationship between the dimorphic prosthecate bacteria Hyphomonas neptunium and Caulobacter crescentus.</title>
        <authorList>
            <person name="Badger J.H."/>
            <person name="Hoover T.R."/>
            <person name="Brun Y.V."/>
            <person name="Weiner R.M."/>
            <person name="Laub M.T."/>
            <person name="Alexandre G."/>
            <person name="Mrazek J."/>
            <person name="Ren Q."/>
            <person name="Paulsen I.T."/>
            <person name="Nelson K.E."/>
            <person name="Khouri H.M."/>
            <person name="Radune D."/>
            <person name="Sosa J."/>
            <person name="Dodson R.J."/>
            <person name="Sullivan S.A."/>
            <person name="Rosovitz M.J."/>
            <person name="Madupu R."/>
            <person name="Brinkac L.M."/>
            <person name="Durkin A.S."/>
            <person name="Daugherty S.C."/>
            <person name="Kothari S.P."/>
            <person name="Giglio M.G."/>
            <person name="Zhou L."/>
            <person name="Haft D.H."/>
            <person name="Selengut J.D."/>
            <person name="Davidsen T.M."/>
            <person name="Yang Q."/>
            <person name="Zafar N."/>
            <person name="Ward N.L."/>
        </authorList>
    </citation>
    <scope>NUCLEOTIDE SEQUENCE [LARGE SCALE GENOMIC DNA]</scope>
    <source>
        <strain>ATCC 15444</strain>
    </source>
</reference>
<sequence length="276" mass="30241">MALKTFNPTSPGRRQLVLVDRSALHKGKPVKALTQGLSSKGGRNNQGRITVRHQGGGVKRLYRQVDFKRTRWDIPATVERLEYDPNRTAFIALIKYQDGELSYIIAPQRLEVGDTVITSATADIKPGNTLPLKSIPVGTIIHNIELKPQKGAQMVRSAGTYAQLVGRDSGYAQIKLASGELRMVLDSCLATIGAVSNPDKMNEVSSKAGRNRHLGKRPTVRGVVMNPVDHPHGGGEGKSSGGRHPVSPWGKKTRGPKTRNNKVTDRLIIRRRNAKR</sequence>
<comment type="function">
    <text evidence="1">One of the primary rRNA binding proteins. Required for association of the 30S and 50S subunits to form the 70S ribosome, for tRNA binding and peptide bond formation. It has been suggested to have peptidyltransferase activity; this is somewhat controversial. Makes several contacts with the 16S rRNA in the 70S ribosome.</text>
</comment>
<comment type="subunit">
    <text evidence="1">Part of the 50S ribosomal subunit. Forms a bridge to the 30S subunit in the 70S ribosome.</text>
</comment>
<comment type="similarity">
    <text evidence="1">Belongs to the universal ribosomal protein uL2 family.</text>
</comment>
<protein>
    <recommendedName>
        <fullName evidence="1">Large ribosomal subunit protein uL2</fullName>
    </recommendedName>
    <alternativeName>
        <fullName evidence="3">50S ribosomal protein L2</fullName>
    </alternativeName>
</protein>
<proteinExistence type="inferred from homology"/>
<keyword id="KW-1185">Reference proteome</keyword>
<keyword id="KW-0687">Ribonucleoprotein</keyword>
<keyword id="KW-0689">Ribosomal protein</keyword>
<keyword id="KW-0694">RNA-binding</keyword>
<keyword id="KW-0699">rRNA-binding</keyword>
<organism>
    <name type="scientific">Hyphomonas neptunium (strain ATCC 15444)</name>
    <dbReference type="NCBI Taxonomy" id="228405"/>
    <lineage>
        <taxon>Bacteria</taxon>
        <taxon>Pseudomonadati</taxon>
        <taxon>Pseudomonadota</taxon>
        <taxon>Alphaproteobacteria</taxon>
        <taxon>Hyphomonadales</taxon>
        <taxon>Hyphomonadaceae</taxon>
        <taxon>Hyphomonas</taxon>
    </lineage>
</organism>
<name>RL2_HYPNA</name>
<feature type="chain" id="PRO_0000309933" description="Large ribosomal subunit protein uL2">
    <location>
        <begin position="1"/>
        <end position="276"/>
    </location>
</feature>
<feature type="region of interest" description="Disordered" evidence="2">
    <location>
        <begin position="223"/>
        <end position="276"/>
    </location>
</feature>
<feature type="compositionally biased region" description="Basic residues" evidence="2">
    <location>
        <begin position="251"/>
        <end position="260"/>
    </location>
</feature>
<gene>
    <name evidence="1" type="primary">rplB</name>
    <name type="ordered locus">HNE_2848</name>
</gene>
<evidence type="ECO:0000255" key="1">
    <source>
        <dbReference type="HAMAP-Rule" id="MF_01320"/>
    </source>
</evidence>
<evidence type="ECO:0000256" key="2">
    <source>
        <dbReference type="SAM" id="MobiDB-lite"/>
    </source>
</evidence>
<evidence type="ECO:0000305" key="3"/>
<dbReference type="EMBL" id="CP000158">
    <property type="protein sequence ID" value="ABI76399.1"/>
    <property type="molecule type" value="Genomic_DNA"/>
</dbReference>
<dbReference type="RefSeq" id="WP_011647823.1">
    <property type="nucleotide sequence ID" value="NC_008358.1"/>
</dbReference>
<dbReference type="SMR" id="Q0BYB7"/>
<dbReference type="STRING" id="228405.HNE_2848"/>
<dbReference type="KEGG" id="hne:HNE_2848"/>
<dbReference type="eggNOG" id="COG0090">
    <property type="taxonomic scope" value="Bacteria"/>
</dbReference>
<dbReference type="HOGENOM" id="CLU_036235_2_1_5"/>
<dbReference type="Proteomes" id="UP000001959">
    <property type="component" value="Chromosome"/>
</dbReference>
<dbReference type="GO" id="GO:0015934">
    <property type="term" value="C:large ribosomal subunit"/>
    <property type="evidence" value="ECO:0007669"/>
    <property type="project" value="InterPro"/>
</dbReference>
<dbReference type="GO" id="GO:0019843">
    <property type="term" value="F:rRNA binding"/>
    <property type="evidence" value="ECO:0007669"/>
    <property type="project" value="UniProtKB-UniRule"/>
</dbReference>
<dbReference type="GO" id="GO:0003735">
    <property type="term" value="F:structural constituent of ribosome"/>
    <property type="evidence" value="ECO:0007669"/>
    <property type="project" value="InterPro"/>
</dbReference>
<dbReference type="GO" id="GO:0016740">
    <property type="term" value="F:transferase activity"/>
    <property type="evidence" value="ECO:0007669"/>
    <property type="project" value="InterPro"/>
</dbReference>
<dbReference type="GO" id="GO:0002181">
    <property type="term" value="P:cytoplasmic translation"/>
    <property type="evidence" value="ECO:0007669"/>
    <property type="project" value="TreeGrafter"/>
</dbReference>
<dbReference type="FunFam" id="2.30.30.30:FF:000001">
    <property type="entry name" value="50S ribosomal protein L2"/>
    <property type="match status" value="1"/>
</dbReference>
<dbReference type="FunFam" id="2.40.50.140:FF:000003">
    <property type="entry name" value="50S ribosomal protein L2"/>
    <property type="match status" value="1"/>
</dbReference>
<dbReference type="FunFam" id="4.10.950.10:FF:000001">
    <property type="entry name" value="50S ribosomal protein L2"/>
    <property type="match status" value="1"/>
</dbReference>
<dbReference type="Gene3D" id="2.30.30.30">
    <property type="match status" value="1"/>
</dbReference>
<dbReference type="Gene3D" id="2.40.50.140">
    <property type="entry name" value="Nucleic acid-binding proteins"/>
    <property type="match status" value="1"/>
</dbReference>
<dbReference type="Gene3D" id="4.10.950.10">
    <property type="entry name" value="Ribosomal protein L2, domain 3"/>
    <property type="match status" value="1"/>
</dbReference>
<dbReference type="HAMAP" id="MF_01320_B">
    <property type="entry name" value="Ribosomal_uL2_B"/>
    <property type="match status" value="1"/>
</dbReference>
<dbReference type="InterPro" id="IPR012340">
    <property type="entry name" value="NA-bd_OB-fold"/>
</dbReference>
<dbReference type="InterPro" id="IPR014722">
    <property type="entry name" value="Rib_uL2_dom2"/>
</dbReference>
<dbReference type="InterPro" id="IPR002171">
    <property type="entry name" value="Ribosomal_uL2"/>
</dbReference>
<dbReference type="InterPro" id="IPR005880">
    <property type="entry name" value="Ribosomal_uL2_bac/org-type"/>
</dbReference>
<dbReference type="InterPro" id="IPR022669">
    <property type="entry name" value="Ribosomal_uL2_C"/>
</dbReference>
<dbReference type="InterPro" id="IPR022671">
    <property type="entry name" value="Ribosomal_uL2_CS"/>
</dbReference>
<dbReference type="InterPro" id="IPR014726">
    <property type="entry name" value="Ribosomal_uL2_dom3"/>
</dbReference>
<dbReference type="InterPro" id="IPR022666">
    <property type="entry name" value="Ribosomal_uL2_RNA-bd_dom"/>
</dbReference>
<dbReference type="InterPro" id="IPR008991">
    <property type="entry name" value="Translation_prot_SH3-like_sf"/>
</dbReference>
<dbReference type="NCBIfam" id="TIGR01171">
    <property type="entry name" value="rplB_bact"/>
    <property type="match status" value="1"/>
</dbReference>
<dbReference type="PANTHER" id="PTHR13691:SF5">
    <property type="entry name" value="LARGE RIBOSOMAL SUBUNIT PROTEIN UL2M"/>
    <property type="match status" value="1"/>
</dbReference>
<dbReference type="PANTHER" id="PTHR13691">
    <property type="entry name" value="RIBOSOMAL PROTEIN L2"/>
    <property type="match status" value="1"/>
</dbReference>
<dbReference type="Pfam" id="PF00181">
    <property type="entry name" value="Ribosomal_L2"/>
    <property type="match status" value="1"/>
</dbReference>
<dbReference type="Pfam" id="PF03947">
    <property type="entry name" value="Ribosomal_L2_C"/>
    <property type="match status" value="1"/>
</dbReference>
<dbReference type="PIRSF" id="PIRSF002158">
    <property type="entry name" value="Ribosomal_L2"/>
    <property type="match status" value="1"/>
</dbReference>
<dbReference type="SMART" id="SM01383">
    <property type="entry name" value="Ribosomal_L2"/>
    <property type="match status" value="1"/>
</dbReference>
<dbReference type="SMART" id="SM01382">
    <property type="entry name" value="Ribosomal_L2_C"/>
    <property type="match status" value="1"/>
</dbReference>
<dbReference type="SUPFAM" id="SSF50249">
    <property type="entry name" value="Nucleic acid-binding proteins"/>
    <property type="match status" value="1"/>
</dbReference>
<dbReference type="SUPFAM" id="SSF50104">
    <property type="entry name" value="Translation proteins SH3-like domain"/>
    <property type="match status" value="1"/>
</dbReference>
<dbReference type="PROSITE" id="PS00467">
    <property type="entry name" value="RIBOSOMAL_L2"/>
    <property type="match status" value="1"/>
</dbReference>
<accession>Q0BYB7</accession>